<evidence type="ECO:0000255" key="1"/>
<evidence type="ECO:0000256" key="2">
    <source>
        <dbReference type="SAM" id="MobiDB-lite"/>
    </source>
</evidence>
<evidence type="ECO:0000269" key="3">
    <source>
    </source>
</evidence>
<evidence type="ECO:0000269" key="4">
    <source>
    </source>
</evidence>
<evidence type="ECO:0000269" key="5">
    <source>
    </source>
</evidence>
<evidence type="ECO:0000303" key="6">
    <source>
    </source>
</evidence>
<evidence type="ECO:0000303" key="7">
    <source>
    </source>
</evidence>
<evidence type="ECO:0000305" key="8">
    <source>
    </source>
</evidence>
<evidence type="ECO:0000305" key="9">
    <source>
    </source>
</evidence>
<evidence type="ECO:0000312" key="10">
    <source>
        <dbReference type="Araport" id="AT5G05680"/>
    </source>
</evidence>
<evidence type="ECO:0000312" key="11">
    <source>
        <dbReference type="EMBL" id="BAB09662.1"/>
    </source>
</evidence>
<evidence type="ECO:0000312" key="12">
    <source>
        <dbReference type="Proteomes" id="UP000006548"/>
    </source>
</evidence>
<sequence length="810" mass="89731">MKFNFNETEDAPDSRRSPTPKEPVRWVPLQSHPVFASLPSSQDEPAVSQLFPRNFMAWDGDSRVYYWDSRRYLLHRLSLRLGEPEPSSVLAAVPSKVMQPDLQVTFSVSKISINKSGSAVLLAGSDGICVMYLFGRASVIEDNVICRVVSIGSEIYTSSDSAITLLQASWHPDSDTHLGILSSDAVFRLFDLSSDTELPEQEYYLQPGEPGRSRTASSIYPADFSFGGDHLWDRFTVFILFTDGSIYILCPVVPFGSVYKWESVMEIYNDANMYGVKSSNSLAVSNSSLAIEWLEATFPDLTEQGTRGENILVVKAQPYALLDASLALQGPLYKASSGDGDEDFAVREAECKGRAVSLLYNLVSKDSILVTAWSAGQLQVDALVDEIQPVWISGNSSRLRMNSHNKIQGVAMICESNISELPVATSNLPLDHTVWLGHPPPLLRLAMVDLALPKMREGGSLVTLFADSLLPERIYSLHDGGIDSTVLHSLPFTSQASGKDEALKTPSVHTVLSTCQEESAVSPLLGFVPLSDSFGYSWIVAVLSSGECIVAEMKTWDLLLPIHVSTDKTVSSSAIEKKEQENSCIISKELLAGPKIRIAPHALPNQRSTPANSVEGRSILLDYVKLFHENYIEYAHKVHFELQHHAPNLKRIIDDQHQRLAEANEKISKVEKNQSFLEKRIDKAIERHDSLEQCLQRLRSLPGTHKKPLTRAELDFKSELDQYAGVEVDALQSSIETLRARVKKSTQKSHKGTVVAASQKKQYSKKNLIQDTQMSQLQSTLAKLSLMNSDNSKKVKIVESALKSQESSFM</sequence>
<name>NUP88_ARATH</name>
<reference key="1">
    <citation type="journal article" date="1997" name="DNA Res.">
        <title>Structural analysis of Arabidopsis thaliana chromosome 5. I. Sequence features of the 1.6 Mb regions covered by twenty physically assigned P1 clones.</title>
        <authorList>
            <person name="Sato S."/>
            <person name="Kotani H."/>
            <person name="Nakamura Y."/>
            <person name="Kaneko T."/>
            <person name="Asamizu E."/>
            <person name="Fukami M."/>
            <person name="Miyajima N."/>
            <person name="Tabata S."/>
        </authorList>
    </citation>
    <scope>NUCLEOTIDE SEQUENCE [LARGE SCALE GENOMIC DNA]</scope>
    <source>
        <strain>cv. Columbia</strain>
    </source>
</reference>
<reference key="2">
    <citation type="journal article" date="2017" name="Plant J.">
        <title>Araport11: a complete reannotation of the Arabidopsis thaliana reference genome.</title>
        <authorList>
            <person name="Cheng C.Y."/>
            <person name="Krishnakumar V."/>
            <person name="Chan A.P."/>
            <person name="Thibaud-Nissen F."/>
            <person name="Schobel S."/>
            <person name="Town C.D."/>
        </authorList>
    </citation>
    <scope>GENOME REANNOTATION</scope>
    <source>
        <strain>cv. Columbia</strain>
    </source>
</reference>
<reference key="3">
    <citation type="submission" date="2006-07" db="EMBL/GenBank/DDBJ databases">
        <title>Large-scale analysis of RIKEN Arabidopsis full-length (RAFL) cDNAs.</title>
        <authorList>
            <person name="Totoki Y."/>
            <person name="Seki M."/>
            <person name="Ishida J."/>
            <person name="Nakajima M."/>
            <person name="Enju A."/>
            <person name="Kamiya A."/>
            <person name="Narusaka M."/>
            <person name="Shin-i T."/>
            <person name="Nakagawa M."/>
            <person name="Sakamoto N."/>
            <person name="Oishi K."/>
            <person name="Kohara Y."/>
            <person name="Kobayashi M."/>
            <person name="Toyoda A."/>
            <person name="Sakaki Y."/>
            <person name="Sakurai T."/>
            <person name="Iida K."/>
            <person name="Akiyama K."/>
            <person name="Satou M."/>
            <person name="Toyoda T."/>
            <person name="Konagaya A."/>
            <person name="Carninci P."/>
            <person name="Kawai J."/>
            <person name="Hayashizaki Y."/>
            <person name="Shinozaki K."/>
        </authorList>
    </citation>
    <scope>NUCLEOTIDE SEQUENCE [LARGE SCALE MRNA]</scope>
    <source>
        <strain>cv. Columbia</strain>
    </source>
</reference>
<reference key="4">
    <citation type="journal article" date="2009" name="Plant Cell">
        <title>Nuclear pore complex component MOS7/Nup88 is required for innate immunity and nuclear accumulation of defense regulators in Arabidopsis.</title>
        <authorList>
            <person name="Cheng Y.T."/>
            <person name="Germain H."/>
            <person name="Wiermer M."/>
            <person name="Bi D."/>
            <person name="Xu F."/>
            <person name="Garcia A.V."/>
            <person name="Wirthmueller L."/>
            <person name="Despres C."/>
            <person name="Parker J.E."/>
            <person name="Zhang Y."/>
            <person name="Li X."/>
        </authorList>
    </citation>
    <scope>FUNCTION</scope>
    <scope>MUTAGENESIS OF 190-PHE--SER-193</scope>
    <scope>DISRUPTION PHENOTYPE</scope>
    <scope>SUBCELLULAR LOCATION</scope>
</reference>
<reference key="5">
    <citation type="journal article" date="2010" name="Nucleus">
        <title>Nucleoporin MOS7/Nup88 contributes to plant immunity and nuclear accumulation of defense regulators.</title>
        <authorList>
            <person name="Wiermer M."/>
            <person name="Germain H."/>
            <person name="Cheng Y.T."/>
            <person name="Garcia A.V."/>
            <person name="Parker J.E."/>
            <person name="Li X."/>
        </authorList>
    </citation>
    <scope>FUNCTION</scope>
</reference>
<reference key="6">
    <citation type="journal article" date="2010" name="Plant Cell">
        <title>Identification and characterization of nuclear pore complex components in Arabidopsis thaliana.</title>
        <authorList>
            <person name="Tamura K."/>
            <person name="Fukao Y."/>
            <person name="Iwamoto M."/>
            <person name="Haraguchi T."/>
            <person name="Hara-Nishimura I."/>
        </authorList>
    </citation>
    <scope>IDENTIFICATION IN THE NUCLEAR PORE COMPLEX BY MASS SPECTROMETRY</scope>
    <scope>SUBCELLULAR LOCATION</scope>
    <scope>NOMENCLATURE</scope>
</reference>
<proteinExistence type="evidence at protein level"/>
<dbReference type="EMBL" id="AB005237">
    <property type="protein sequence ID" value="BAB09662.1"/>
    <property type="molecule type" value="Genomic_DNA"/>
</dbReference>
<dbReference type="EMBL" id="CP002688">
    <property type="protein sequence ID" value="AED90908.1"/>
    <property type="molecule type" value="Genomic_DNA"/>
</dbReference>
<dbReference type="EMBL" id="AK229039">
    <property type="protein sequence ID" value="BAF00923.1"/>
    <property type="molecule type" value="mRNA"/>
</dbReference>
<dbReference type="RefSeq" id="NP_196187.1">
    <property type="nucleotide sequence ID" value="NM_120650.4"/>
</dbReference>
<dbReference type="SMR" id="Q9FFK6"/>
<dbReference type="BioGRID" id="15731">
    <property type="interactions" value="8"/>
</dbReference>
<dbReference type="FunCoup" id="Q9FFK6">
    <property type="interactions" value="695"/>
</dbReference>
<dbReference type="STRING" id="3702.Q9FFK6"/>
<dbReference type="iPTMnet" id="Q9FFK6"/>
<dbReference type="PaxDb" id="3702-AT5G05680.1"/>
<dbReference type="ProteomicsDB" id="248752"/>
<dbReference type="EnsemblPlants" id="AT5G05680.1">
    <property type="protein sequence ID" value="AT5G05680.1"/>
    <property type="gene ID" value="AT5G05680"/>
</dbReference>
<dbReference type="GeneID" id="830452"/>
<dbReference type="Gramene" id="AT5G05680.1">
    <property type="protein sequence ID" value="AT5G05680.1"/>
    <property type="gene ID" value="AT5G05680"/>
</dbReference>
<dbReference type="KEGG" id="ath:AT5G05680"/>
<dbReference type="Araport" id="AT5G05680"/>
<dbReference type="TAIR" id="AT5G05680">
    <property type="gene designation" value="MOS7"/>
</dbReference>
<dbReference type="eggNOG" id="KOG4460">
    <property type="taxonomic scope" value="Eukaryota"/>
</dbReference>
<dbReference type="HOGENOM" id="CLU_023826_0_0_1"/>
<dbReference type="InParanoid" id="Q9FFK6"/>
<dbReference type="OMA" id="VFILFTD"/>
<dbReference type="PhylomeDB" id="Q9FFK6"/>
<dbReference type="CD-CODE" id="4299E36E">
    <property type="entry name" value="Nucleolus"/>
</dbReference>
<dbReference type="PRO" id="PR:Q9FFK6"/>
<dbReference type="Proteomes" id="UP000006548">
    <property type="component" value="Chromosome 5"/>
</dbReference>
<dbReference type="ExpressionAtlas" id="Q9FFK6">
    <property type="expression patterns" value="baseline and differential"/>
</dbReference>
<dbReference type="GO" id="GO:0005635">
    <property type="term" value="C:nuclear envelope"/>
    <property type="evidence" value="ECO:0000314"/>
    <property type="project" value="TAIR"/>
</dbReference>
<dbReference type="GO" id="GO:0005643">
    <property type="term" value="C:nuclear pore"/>
    <property type="evidence" value="ECO:0000314"/>
    <property type="project" value="TAIR"/>
</dbReference>
<dbReference type="GO" id="GO:0017056">
    <property type="term" value="F:structural constituent of nuclear pore"/>
    <property type="evidence" value="ECO:0007669"/>
    <property type="project" value="InterPro"/>
</dbReference>
<dbReference type="GO" id="GO:0045087">
    <property type="term" value="P:innate immune response"/>
    <property type="evidence" value="ECO:0000315"/>
    <property type="project" value="TAIR"/>
</dbReference>
<dbReference type="GO" id="GO:0051028">
    <property type="term" value="P:mRNA transport"/>
    <property type="evidence" value="ECO:0007669"/>
    <property type="project" value="UniProtKB-KW"/>
</dbReference>
<dbReference type="GO" id="GO:0006611">
    <property type="term" value="P:protein export from nucleus"/>
    <property type="evidence" value="ECO:0000315"/>
    <property type="project" value="TAIR"/>
</dbReference>
<dbReference type="GO" id="GO:0000055">
    <property type="term" value="P:ribosomal large subunit export from nucleus"/>
    <property type="evidence" value="ECO:0007669"/>
    <property type="project" value="InterPro"/>
</dbReference>
<dbReference type="GO" id="GO:0000056">
    <property type="term" value="P:ribosomal small subunit export from nucleus"/>
    <property type="evidence" value="ECO:0007669"/>
    <property type="project" value="InterPro"/>
</dbReference>
<dbReference type="GO" id="GO:0009627">
    <property type="term" value="P:systemic acquired resistance"/>
    <property type="evidence" value="ECO:0000315"/>
    <property type="project" value="TAIR"/>
</dbReference>
<dbReference type="InterPro" id="IPR019321">
    <property type="entry name" value="Nucleoporin_Nup88"/>
</dbReference>
<dbReference type="InterPro" id="IPR037700">
    <property type="entry name" value="NUP88/NUP82"/>
</dbReference>
<dbReference type="InterPro" id="IPR036322">
    <property type="entry name" value="WD40_repeat_dom_sf"/>
</dbReference>
<dbReference type="PANTHER" id="PTHR13257:SF0">
    <property type="entry name" value="NUCLEAR PORE COMPLEX PROTEIN NUP88"/>
    <property type="match status" value="1"/>
</dbReference>
<dbReference type="PANTHER" id="PTHR13257">
    <property type="entry name" value="NUCLEOPORIN NUP84-RELATED"/>
    <property type="match status" value="1"/>
</dbReference>
<dbReference type="Pfam" id="PF10168">
    <property type="entry name" value="Nup88"/>
    <property type="match status" value="2"/>
</dbReference>
<dbReference type="SUPFAM" id="SSF50978">
    <property type="entry name" value="WD40 repeat-like"/>
    <property type="match status" value="1"/>
</dbReference>
<feature type="chain" id="PRO_0000431085" description="Nuclear pore complex protein NUP88">
    <location>
        <begin position="1"/>
        <end position="810"/>
    </location>
</feature>
<feature type="region of interest" description="Disordered" evidence="2">
    <location>
        <begin position="1"/>
        <end position="23"/>
    </location>
</feature>
<feature type="coiled-coil region" evidence="1">
    <location>
        <begin position="646"/>
        <end position="748"/>
    </location>
</feature>
<feature type="mutagenesis site" description="In mos7-1; enhanced disease susceptibility." evidence="3">
    <location>
        <begin position="190"/>
        <end position="193"/>
    </location>
</feature>
<feature type="sequence conflict" description="In Ref. 3; BAF00923." ref="3">
    <original>G</original>
    <variation>D</variation>
    <location>
        <position position="244"/>
    </location>
</feature>
<gene>
    <name evidence="7" type="primary">NUP88</name>
    <name type="synonym">EMB2789</name>
    <name evidence="6" type="synonym">MOS7</name>
    <name evidence="10" type="ordered locus">At5g05680</name>
    <name evidence="11" type="ORF">MJJ3.8</name>
</gene>
<protein>
    <recommendedName>
        <fullName evidence="7">Nuclear pore complex protein NUP88</fullName>
    </recommendedName>
    <alternativeName>
        <fullName>Nucleoporin 88</fullName>
    </alternativeName>
    <alternativeName>
        <fullName>Protein EMBRYO DEFECTIVE 2789</fullName>
    </alternativeName>
    <alternativeName>
        <fullName evidence="6">Protein MODIFIER OF SNC1,7</fullName>
    </alternativeName>
</protein>
<comment type="function">
    <text evidence="3 5">Involved in the regulation of exportin-mediated nuclear protein export. Required for resistance mediated by multiple R proteins and for the appropriate nuclear accumulation of SNC1 and of the downstream defense signaling components EDS1 and NPR1. Not involved in salt tolerance, ethylene and auxin responses, but required for systemic acquired resistance.</text>
</comment>
<comment type="subunit">
    <text evidence="9">Part of the nuclear pore complex (NPC). The NPC has an eight-fold symmetrical structure comprising a central transport channel and two rings, the cytoplasmic and nuclear rings, to which eight filaments are attached. The cytoplasmic filaments have loose ends, while the nuclear filaments are joined in a distal ring, forming a nuclear basket. NPCs are highly dynamic in configuration and composition, and can be devided in 3 subcomplexes, the NUP62 subcomplex, the NUP107-160 subcomplex and the NUP93 subcomplex, containing approximately 30 different nucleoporin proteins.</text>
</comment>
<comment type="subcellular location">
    <subcellularLocation>
        <location evidence="3 4">Nucleus envelope</location>
    </subcellularLocation>
    <subcellularLocation>
        <location evidence="8 9">Nucleus</location>
        <location evidence="8 9">Nuclear pore complex</location>
    </subcellularLocation>
</comment>
<comment type="disruption phenotype">
    <text evidence="3">Lethal.</text>
</comment>
<accession>Q9FFK6</accession>
<accession>Q0WPM6</accession>
<keyword id="KW-0175">Coiled coil</keyword>
<keyword id="KW-0509">mRNA transport</keyword>
<keyword id="KW-0906">Nuclear pore complex</keyword>
<keyword id="KW-0539">Nucleus</keyword>
<keyword id="KW-0653">Protein transport</keyword>
<keyword id="KW-1185">Reference proteome</keyword>
<keyword id="KW-0811">Translocation</keyword>
<keyword id="KW-0813">Transport</keyword>
<organism evidence="12">
    <name type="scientific">Arabidopsis thaliana</name>
    <name type="common">Mouse-ear cress</name>
    <dbReference type="NCBI Taxonomy" id="3702"/>
    <lineage>
        <taxon>Eukaryota</taxon>
        <taxon>Viridiplantae</taxon>
        <taxon>Streptophyta</taxon>
        <taxon>Embryophyta</taxon>
        <taxon>Tracheophyta</taxon>
        <taxon>Spermatophyta</taxon>
        <taxon>Magnoliopsida</taxon>
        <taxon>eudicotyledons</taxon>
        <taxon>Gunneridae</taxon>
        <taxon>Pentapetalae</taxon>
        <taxon>rosids</taxon>
        <taxon>malvids</taxon>
        <taxon>Brassicales</taxon>
        <taxon>Brassicaceae</taxon>
        <taxon>Camelineae</taxon>
        <taxon>Arabidopsis</taxon>
    </lineage>
</organism>